<protein>
    <recommendedName>
        <fullName>Solute carrier family 35 member B1</fullName>
    </recommendedName>
    <alternativeName>
        <fullName evidence="2">ATP/ADP exchanger ER</fullName>
        <shortName evidence="2">AXER</shortName>
    </alternativeName>
    <alternativeName>
        <fullName evidence="2">Endoplasmic reticulum ATP/ADP translocase</fullName>
    </alternativeName>
    <alternativeName>
        <fullName evidence="2">UDP-galactose transporter-related protein 1</fullName>
        <shortName evidence="2">UGTrel1</shortName>
    </alternativeName>
</protein>
<comment type="function">
    <text evidence="2">ATP:ADP antiporter that catalyzes the exchange of ATP and ADP across the endoplasmic reticulum (ER) membrane. Imports ATP from the cytosol to the ER lumen and exports ADP in the opposite direction. Regulates ER energy metabolism and protein biogenesis. Appears to be part of a calcium-dependent ER to cytosol low energy response axis, where calcium efflux from ER to the cytosol triggers ATP import into the ER lumen to maintain sufficient ATP supply. Provides ATP to ER chaperone HSPA5 that drives protein folding and trafficking in the ER. Can transport dATP, UTP or UDP in exchange for ATP, but the physiological relevance of this process remains to be established.</text>
</comment>
<comment type="catalytic activity">
    <reaction evidence="2">
        <text>ADP(in) + ATP(out) = ADP(out) + ATP(in)</text>
        <dbReference type="Rhea" id="RHEA:34999"/>
        <dbReference type="ChEBI" id="CHEBI:30616"/>
        <dbReference type="ChEBI" id="CHEBI:456216"/>
    </reaction>
    <physiologicalReaction direction="right-to-left" evidence="2">
        <dbReference type="Rhea" id="RHEA:35001"/>
    </physiologicalReaction>
</comment>
<comment type="catalytic activity">
    <reaction evidence="2">
        <text>UDP(out) + ATP(in) = UDP(in) + ATP(out)</text>
        <dbReference type="Rhea" id="RHEA:73707"/>
        <dbReference type="ChEBI" id="CHEBI:30616"/>
        <dbReference type="ChEBI" id="CHEBI:58223"/>
    </reaction>
    <physiologicalReaction direction="left-to-right" evidence="2">
        <dbReference type="Rhea" id="RHEA:73708"/>
    </physiologicalReaction>
</comment>
<comment type="catalytic activity">
    <reaction evidence="2">
        <text>UTP(out) + ATP(in) = UTP(in) + ATP(out)</text>
        <dbReference type="Rhea" id="RHEA:73711"/>
        <dbReference type="ChEBI" id="CHEBI:30616"/>
        <dbReference type="ChEBI" id="CHEBI:46398"/>
    </reaction>
    <physiologicalReaction direction="left-to-right" evidence="2">
        <dbReference type="Rhea" id="RHEA:73712"/>
    </physiologicalReaction>
</comment>
<comment type="catalytic activity">
    <reaction evidence="2">
        <text>dATP(out) + ATP(in) = dATP(in) + ATP(out)</text>
        <dbReference type="Rhea" id="RHEA:73715"/>
        <dbReference type="ChEBI" id="CHEBI:30616"/>
        <dbReference type="ChEBI" id="CHEBI:61404"/>
    </reaction>
    <physiologicalReaction direction="left-to-right" evidence="2">
        <dbReference type="Rhea" id="RHEA:73716"/>
    </physiologicalReaction>
</comment>
<comment type="subcellular location">
    <subcellularLocation>
        <location evidence="2">Endoplasmic reticulum membrane</location>
        <topology evidence="3">Multi-pass membrane protein</topology>
    </subcellularLocation>
</comment>
<comment type="domain">
    <text evidence="1">The di-lysine motif confers endoplasmic reticulum localization for type I membrane proteins.</text>
</comment>
<comment type="similarity">
    <text evidence="4">Belongs to the nucleotide-sugar transporter family. SLC35B subfamily.</text>
</comment>
<comment type="sequence caution" evidence="4">
    <conflict type="erroneous initiation">
        <sequence resource="EMBL-CDS" id="CAD33236"/>
    </conflict>
</comment>
<evidence type="ECO:0000250" key="1"/>
<evidence type="ECO:0000250" key="2">
    <source>
        <dbReference type="UniProtKB" id="P78383"/>
    </source>
</evidence>
<evidence type="ECO:0000255" key="3"/>
<evidence type="ECO:0000305" key="4"/>
<reference key="1">
    <citation type="journal article" date="2003" name="Biochimie">
        <title>The nucleotide-sugar transporter family: a phylogenetic approach.</title>
        <authorList>
            <person name="Martinez-Duncker I."/>
            <person name="Mollicone R."/>
            <person name="Codogno P."/>
            <person name="Oriol R."/>
        </authorList>
    </citation>
    <scope>NUCLEOTIDE SEQUENCE [MRNA]</scope>
    <scope>GENE FAMILY</scope>
</reference>
<name>S35B1_BOVIN</name>
<proteinExistence type="evidence at transcript level"/>
<gene>
    <name type="primary">SLC35B1</name>
    <name type="synonym">ERNST</name>
</gene>
<sequence>MAASSSLVPDRLRLPLCFLGVFVCYFYYGILQEKITRGKYGEGAKQETFTFALTLVFIQCVVNAVFAKILIQFFDTARVDRTRSWLYAACSVSYLGAMVSSNSALQFVNYPTQVLGKSCKPIPVMLLGVTLLKKKYPMAKYLCVLLIVAGVALFMYKPKKVVGIEEHTIGYGELLLLLSLTLDGLTGVSQDHMRAHYQTGSNHMMLNINLWSTLLLGAGILFTGELWEFLSFAERYPTIVYNILLFGLTSALGQSFIFMTVVYFGPLTCSIITTTRKFFTILASVILFANPISPMQWVGTVLVFLGLGLDAKFGKGAKKTSH</sequence>
<keyword id="KW-0050">Antiport</keyword>
<keyword id="KW-0256">Endoplasmic reticulum</keyword>
<keyword id="KW-0472">Membrane</keyword>
<keyword id="KW-1185">Reference proteome</keyword>
<keyword id="KW-0812">Transmembrane</keyword>
<keyword id="KW-1133">Transmembrane helix</keyword>
<keyword id="KW-0813">Transport</keyword>
<feature type="chain" id="PRO_0000213365" description="Solute carrier family 35 member B1">
    <location>
        <begin position="1"/>
        <end position="322"/>
    </location>
</feature>
<feature type="transmembrane region" description="Helical" evidence="3">
    <location>
        <begin position="12"/>
        <end position="32"/>
    </location>
</feature>
<feature type="transmembrane region" description="Helical" evidence="3">
    <location>
        <begin position="51"/>
        <end position="71"/>
    </location>
</feature>
<feature type="transmembrane region" description="Helical" evidence="3">
    <location>
        <begin position="85"/>
        <end position="105"/>
    </location>
</feature>
<feature type="transmembrane region" description="Helical" evidence="3">
    <location>
        <begin position="136"/>
        <end position="156"/>
    </location>
</feature>
<feature type="transmembrane region" description="Helical" evidence="3">
    <location>
        <begin position="168"/>
        <end position="188"/>
    </location>
</feature>
<feature type="transmembrane region" description="Helical" evidence="3">
    <location>
        <begin position="210"/>
        <end position="230"/>
    </location>
</feature>
<feature type="transmembrane region" description="Helical" evidence="3">
    <location>
        <begin position="243"/>
        <end position="263"/>
    </location>
</feature>
<feature type="transmembrane region" description="Helical" evidence="3">
    <location>
        <begin position="285"/>
        <end position="305"/>
    </location>
</feature>
<feature type="short sequence motif" description="Di-lysine motif">
    <location>
        <begin position="318"/>
        <end position="322"/>
    </location>
</feature>
<accession>Q8MII5</accession>
<organism>
    <name type="scientific">Bos taurus</name>
    <name type="common">Bovine</name>
    <dbReference type="NCBI Taxonomy" id="9913"/>
    <lineage>
        <taxon>Eukaryota</taxon>
        <taxon>Metazoa</taxon>
        <taxon>Chordata</taxon>
        <taxon>Craniata</taxon>
        <taxon>Vertebrata</taxon>
        <taxon>Euteleostomi</taxon>
        <taxon>Mammalia</taxon>
        <taxon>Eutheria</taxon>
        <taxon>Laurasiatheria</taxon>
        <taxon>Artiodactyla</taxon>
        <taxon>Ruminantia</taxon>
        <taxon>Pecora</taxon>
        <taxon>Bovidae</taxon>
        <taxon>Bovinae</taxon>
        <taxon>Bos</taxon>
    </lineage>
</organism>
<dbReference type="EMBL" id="AJ489254">
    <property type="protein sequence ID" value="CAD33236.1"/>
    <property type="status" value="ALT_INIT"/>
    <property type="molecule type" value="mRNA"/>
</dbReference>
<dbReference type="RefSeq" id="NP_851934.1">
    <property type="nucleotide sequence ID" value="NM_181338.2"/>
</dbReference>
<dbReference type="SMR" id="Q8MII5"/>
<dbReference type="FunCoup" id="Q8MII5">
    <property type="interactions" value="1660"/>
</dbReference>
<dbReference type="STRING" id="9913.ENSBTAP00000073499"/>
<dbReference type="PaxDb" id="9913-ENSBTAP00000009034"/>
<dbReference type="GeneID" id="353217"/>
<dbReference type="KEGG" id="bta:353217"/>
<dbReference type="CTD" id="10237"/>
<dbReference type="eggNOG" id="KOG1580">
    <property type="taxonomic scope" value="Eukaryota"/>
</dbReference>
<dbReference type="HOGENOM" id="CLU_036019_1_1_1"/>
<dbReference type="InParanoid" id="Q8MII5"/>
<dbReference type="OrthoDB" id="78344at2759"/>
<dbReference type="Proteomes" id="UP000009136">
    <property type="component" value="Unplaced"/>
</dbReference>
<dbReference type="GO" id="GO:0005789">
    <property type="term" value="C:endoplasmic reticulum membrane"/>
    <property type="evidence" value="ECO:0000318"/>
    <property type="project" value="GO_Central"/>
</dbReference>
<dbReference type="GO" id="GO:0000139">
    <property type="term" value="C:Golgi membrane"/>
    <property type="evidence" value="ECO:0000318"/>
    <property type="project" value="GO_Central"/>
</dbReference>
<dbReference type="GO" id="GO:0015297">
    <property type="term" value="F:antiporter activity"/>
    <property type="evidence" value="ECO:0007669"/>
    <property type="project" value="UniProtKB-KW"/>
</dbReference>
<dbReference type="GO" id="GO:0005459">
    <property type="term" value="F:UDP-galactose transmembrane transporter activity"/>
    <property type="evidence" value="ECO:0000318"/>
    <property type="project" value="GO_Central"/>
</dbReference>
<dbReference type="GO" id="GO:0005460">
    <property type="term" value="F:UDP-glucose transmembrane transporter activity"/>
    <property type="evidence" value="ECO:0000318"/>
    <property type="project" value="GO_Central"/>
</dbReference>
<dbReference type="GO" id="GO:0072334">
    <property type="term" value="P:UDP-galactose transmembrane transport"/>
    <property type="evidence" value="ECO:0000318"/>
    <property type="project" value="GO_Central"/>
</dbReference>
<dbReference type="Gene3D" id="1.10.3730.20">
    <property type="match status" value="1"/>
</dbReference>
<dbReference type="InterPro" id="IPR013657">
    <property type="entry name" value="SCL35B1-4/HUT1"/>
</dbReference>
<dbReference type="PANTHER" id="PTHR10778">
    <property type="entry name" value="SOLUTE CARRIER FAMILY 35 MEMBER B"/>
    <property type="match status" value="1"/>
</dbReference>
<dbReference type="PANTHER" id="PTHR10778:SF10">
    <property type="entry name" value="SOLUTE CARRIER FAMILY 35 MEMBER B1"/>
    <property type="match status" value="1"/>
</dbReference>
<dbReference type="Pfam" id="PF08449">
    <property type="entry name" value="UAA"/>
    <property type="match status" value="1"/>
</dbReference>
<dbReference type="SUPFAM" id="SSF103481">
    <property type="entry name" value="Multidrug resistance efflux transporter EmrE"/>
    <property type="match status" value="2"/>
</dbReference>